<gene>
    <name type="primary">dgt</name>
    <name type="ordered locus">NE1982</name>
</gene>
<accession>Q820J5</accession>
<name>DGTL1_NITEU</name>
<reference key="1">
    <citation type="journal article" date="2003" name="J. Bacteriol.">
        <title>Complete genome sequence of the ammonia-oxidizing bacterium and obligate chemolithoautotroph Nitrosomonas europaea.</title>
        <authorList>
            <person name="Chain P."/>
            <person name="Lamerdin J.E."/>
            <person name="Larimer F.W."/>
            <person name="Regala W."/>
            <person name="Lao V."/>
            <person name="Land M.L."/>
            <person name="Hauser L."/>
            <person name="Hooper A.B."/>
            <person name="Klotz M.G."/>
            <person name="Norton J."/>
            <person name="Sayavedra-Soto L.A."/>
            <person name="Arciero D.M."/>
            <person name="Hommes N.G."/>
            <person name="Whittaker M.M."/>
            <person name="Arp D.J."/>
        </authorList>
    </citation>
    <scope>NUCLEOTIDE SEQUENCE [LARGE SCALE GENOMIC DNA]</scope>
    <source>
        <strain>ATCC 19718 / CIP 103999 / KCTC 2705 / NBRC 14298</strain>
    </source>
</reference>
<evidence type="ECO:0000255" key="1">
    <source>
        <dbReference type="HAMAP-Rule" id="MF_01212"/>
    </source>
</evidence>
<evidence type="ECO:0000255" key="2">
    <source>
        <dbReference type="PROSITE-ProRule" id="PRU01175"/>
    </source>
</evidence>
<keyword id="KW-0378">Hydrolase</keyword>
<keyword id="KW-1185">Reference proteome</keyword>
<comment type="similarity">
    <text evidence="1">Belongs to the dGTPase family. Type 2 subfamily.</text>
</comment>
<dbReference type="EMBL" id="AL954747">
    <property type="protein sequence ID" value="CAD85893.1"/>
    <property type="molecule type" value="Genomic_DNA"/>
</dbReference>
<dbReference type="RefSeq" id="WP_011112513.1">
    <property type="nucleotide sequence ID" value="NC_004757.1"/>
</dbReference>
<dbReference type="SMR" id="Q820J5"/>
<dbReference type="STRING" id="228410.NE1982"/>
<dbReference type="GeneID" id="87105137"/>
<dbReference type="KEGG" id="neu:NE1982"/>
<dbReference type="eggNOG" id="COG0232">
    <property type="taxonomic scope" value="Bacteria"/>
</dbReference>
<dbReference type="HOGENOM" id="CLU_028163_1_0_4"/>
<dbReference type="OrthoDB" id="9803619at2"/>
<dbReference type="PhylomeDB" id="Q820J5"/>
<dbReference type="Proteomes" id="UP000001416">
    <property type="component" value="Chromosome"/>
</dbReference>
<dbReference type="GO" id="GO:0008832">
    <property type="term" value="F:dGTPase activity"/>
    <property type="evidence" value="ECO:0007669"/>
    <property type="project" value="TreeGrafter"/>
</dbReference>
<dbReference type="GO" id="GO:0006203">
    <property type="term" value="P:dGTP catabolic process"/>
    <property type="evidence" value="ECO:0007669"/>
    <property type="project" value="TreeGrafter"/>
</dbReference>
<dbReference type="CDD" id="cd00077">
    <property type="entry name" value="HDc"/>
    <property type="match status" value="1"/>
</dbReference>
<dbReference type="FunFam" id="1.10.3210.10:FF:000024">
    <property type="entry name" value="Deoxyguanosinetriphosphate triphosphohydrolase-like protein"/>
    <property type="match status" value="1"/>
</dbReference>
<dbReference type="Gene3D" id="1.10.3210.10">
    <property type="entry name" value="Hypothetical protein af1432"/>
    <property type="match status" value="1"/>
</dbReference>
<dbReference type="HAMAP" id="MF_01212">
    <property type="entry name" value="dGTPase_type2"/>
    <property type="match status" value="1"/>
</dbReference>
<dbReference type="InterPro" id="IPR006261">
    <property type="entry name" value="dGTPase"/>
</dbReference>
<dbReference type="InterPro" id="IPR050135">
    <property type="entry name" value="dGTPase-like"/>
</dbReference>
<dbReference type="InterPro" id="IPR023023">
    <property type="entry name" value="dNTPase_2"/>
</dbReference>
<dbReference type="InterPro" id="IPR003607">
    <property type="entry name" value="HD/PDEase_dom"/>
</dbReference>
<dbReference type="InterPro" id="IPR006674">
    <property type="entry name" value="HD_domain"/>
</dbReference>
<dbReference type="InterPro" id="IPR026875">
    <property type="entry name" value="PHydrolase_assoc_dom"/>
</dbReference>
<dbReference type="NCBIfam" id="TIGR01353">
    <property type="entry name" value="dGTP_triPase"/>
    <property type="match status" value="1"/>
</dbReference>
<dbReference type="NCBIfam" id="NF002326">
    <property type="entry name" value="PRK01286.1-1"/>
    <property type="match status" value="1"/>
</dbReference>
<dbReference type="PANTHER" id="PTHR11373:SF43">
    <property type="entry name" value="DEOXYGUANOSINETRIPHOSPHATE TRIPHOSPHOHYDROLASE-LIKE PROTEIN"/>
    <property type="match status" value="1"/>
</dbReference>
<dbReference type="PANTHER" id="PTHR11373">
    <property type="entry name" value="DEOXYNUCLEOSIDE TRIPHOSPHATE TRIPHOSPHOHYDROLASE"/>
    <property type="match status" value="1"/>
</dbReference>
<dbReference type="Pfam" id="PF01966">
    <property type="entry name" value="HD"/>
    <property type="match status" value="1"/>
</dbReference>
<dbReference type="Pfam" id="PF13286">
    <property type="entry name" value="HD_assoc"/>
    <property type="match status" value="1"/>
</dbReference>
<dbReference type="SMART" id="SM00471">
    <property type="entry name" value="HDc"/>
    <property type="match status" value="1"/>
</dbReference>
<dbReference type="SUPFAM" id="SSF109604">
    <property type="entry name" value="HD-domain/PDEase-like"/>
    <property type="match status" value="1"/>
</dbReference>
<dbReference type="PROSITE" id="PS51831">
    <property type="entry name" value="HD"/>
    <property type="match status" value="1"/>
</dbReference>
<organism>
    <name type="scientific">Nitrosomonas europaea (strain ATCC 19718 / CIP 103999 / KCTC 2705 / NBRC 14298)</name>
    <dbReference type="NCBI Taxonomy" id="228410"/>
    <lineage>
        <taxon>Bacteria</taxon>
        <taxon>Pseudomonadati</taxon>
        <taxon>Pseudomonadota</taxon>
        <taxon>Betaproteobacteria</taxon>
        <taxon>Nitrosomonadales</taxon>
        <taxon>Nitrosomonadaceae</taxon>
        <taxon>Nitrosomonas</taxon>
    </lineage>
</organism>
<proteinExistence type="inferred from homology"/>
<feature type="chain" id="PRO_0000205311" description="Deoxyguanosinetriphosphate triphosphohydrolase-like protein">
    <location>
        <begin position="1"/>
        <end position="374"/>
    </location>
</feature>
<feature type="domain" description="HD" evidence="2">
    <location>
        <begin position="65"/>
        <end position="196"/>
    </location>
</feature>
<sequence>MRSNLAPYAVSDTNSRGRRIHEELPAGRSQFQRDRDRVIHSTAFRRLEYKTQVFVNHEGDLFRTRLTHSLEVAQIGRSIARNLNLNEELVEAITLSHDLGHTPFGHAGQDALNDCMKTYGGFEHNLQSLRVVDVLEERYATFNGLNLCFETREGILKRVPKSKAAALDELGTRFLHGHSASLEAQLANLADEIAYNNHDVDDGLRSGLITLAQLEEIEIFARHLHQVKQHYPDITGRRLIHETVRGMINTLVVDLTVQSGTRIRDASPDSPDSVREKPVLIGFSDTIKRQQQELKRFLHKNLYKHYQVMRMSNKARHTIEKLFTTFETEPALLPYEYQQKFQEYGHQAIADYIAGMTDRYAIREYQRLFAITEN</sequence>
<protein>
    <recommendedName>
        <fullName evidence="1">Deoxyguanosinetriphosphate triphosphohydrolase-like protein</fullName>
    </recommendedName>
</protein>